<dbReference type="EC" id="4.2.3.45"/>
<dbReference type="EC" id="5.5.1.12"/>
<dbReference type="EMBL" id="AB252834">
    <property type="protein sequence ID" value="BAG30961.1"/>
    <property type="molecule type" value="mRNA"/>
</dbReference>
<dbReference type="SMR" id="B2DBF0"/>
<dbReference type="KEGG" id="ag:BAG30961"/>
<dbReference type="BioCyc" id="MetaCyc:MONOMER-15022"/>
<dbReference type="BRENDA" id="4.2.3.45">
    <property type="organism ID" value="10693"/>
</dbReference>
<dbReference type="GO" id="GO:0050559">
    <property type="term" value="F:copalyl diphosphate synthase activity"/>
    <property type="evidence" value="ECO:0007669"/>
    <property type="project" value="UniProtKB-EC"/>
</dbReference>
<dbReference type="GO" id="GO:0000287">
    <property type="term" value="F:magnesium ion binding"/>
    <property type="evidence" value="ECO:0007669"/>
    <property type="project" value="TreeGrafter"/>
</dbReference>
<dbReference type="GO" id="GO:0010333">
    <property type="term" value="F:terpene synthase activity"/>
    <property type="evidence" value="ECO:0007669"/>
    <property type="project" value="InterPro"/>
</dbReference>
<dbReference type="GO" id="GO:0016102">
    <property type="term" value="P:diterpenoid biosynthetic process"/>
    <property type="evidence" value="ECO:0007669"/>
    <property type="project" value="TreeGrafter"/>
</dbReference>
<dbReference type="Gene3D" id="1.50.10.160">
    <property type="match status" value="1"/>
</dbReference>
<dbReference type="Gene3D" id="1.50.10.20">
    <property type="match status" value="1"/>
</dbReference>
<dbReference type="InterPro" id="IPR017057">
    <property type="entry name" value="Ent-kaurene_synthase_fun"/>
</dbReference>
<dbReference type="InterPro" id="IPR050148">
    <property type="entry name" value="Terpene_synthase-like"/>
</dbReference>
<dbReference type="InterPro" id="IPR008930">
    <property type="entry name" value="Terpenoid_cyclase/PrenylTrfase"/>
</dbReference>
<dbReference type="PANTHER" id="PTHR31739:SF25">
    <property type="entry name" value="(E,E)-GERANYLLINALOOL SYNTHASE"/>
    <property type="match status" value="1"/>
</dbReference>
<dbReference type="PANTHER" id="PTHR31739">
    <property type="entry name" value="ENT-COPALYL DIPHOSPHATE SYNTHASE, CHLOROPLASTIC"/>
    <property type="match status" value="1"/>
</dbReference>
<dbReference type="PIRSF" id="PIRSF036498">
    <property type="entry name" value="Ent-kaurene_synthase_fungi"/>
    <property type="match status" value="1"/>
</dbReference>
<dbReference type="SUPFAM" id="SSF48239">
    <property type="entry name" value="Terpenoid cyclases/Protein prenyltransferases"/>
    <property type="match status" value="1"/>
</dbReference>
<reference key="1">
    <citation type="journal article" date="2008" name="Biosci. Biotechnol. Biochem.">
        <title>Identification of diterpene biosynthetic gene clusters and functional analysis of labdane-related diterpene cyclases in Phomopsis amygdali.</title>
        <authorList>
            <person name="Toyomasu T."/>
            <person name="Niida R."/>
            <person name="Kenmoku H."/>
            <person name="Kanno Y."/>
            <person name="Miura S."/>
            <person name="Nakano C."/>
            <person name="Shiono Y."/>
            <person name="Mitsuhashi W."/>
            <person name="Toshima H."/>
            <person name="Oikawa H."/>
            <person name="Hoshino T."/>
            <person name="Dairi T."/>
            <person name="Kato N."/>
            <person name="Sassa T."/>
        </authorList>
    </citation>
    <scope>NUCLEOTIDE SEQUENCE [MRNA]</scope>
    <scope>DOMAIN</scope>
    <scope>FUNCTION</scope>
    <scope>CATALYTIC ACTIVITY</scope>
    <source>
        <strain>N2</strain>
    </source>
</reference>
<accession>B2DBF0</accession>
<proteinExistence type="evidence at protein level"/>
<evidence type="ECO:0000250" key="1">
    <source>
        <dbReference type="UniProtKB" id="Q40577"/>
    </source>
</evidence>
<evidence type="ECO:0000269" key="2">
    <source>
    </source>
</evidence>
<evidence type="ECO:0000305" key="3"/>
<gene>
    <name type="primary">PaDC1</name>
</gene>
<feature type="chain" id="PRO_0000415666" description="Phyllocladan-16-alpha-ol synthase">
    <location>
        <begin position="1"/>
        <end position="1004"/>
    </location>
</feature>
<feature type="short sequence motif" description="DXDD motif">
    <location>
        <begin position="321"/>
        <end position="324"/>
    </location>
</feature>
<feature type="short sequence motif" description="DEXXE motif">
    <location>
        <begin position="667"/>
        <end position="671"/>
    </location>
</feature>
<feature type="binding site" evidence="1">
    <location>
        <position position="667"/>
    </location>
    <ligand>
        <name>Mg(2+)</name>
        <dbReference type="ChEBI" id="CHEBI:18420"/>
        <label>1</label>
    </ligand>
</feature>
<feature type="binding site" evidence="1">
    <location>
        <position position="667"/>
    </location>
    <ligand>
        <name>Mg(2+)</name>
        <dbReference type="ChEBI" id="CHEBI:18420"/>
        <label>2</label>
    </ligand>
</feature>
<feature type="binding site" evidence="1">
    <location>
        <position position="671"/>
    </location>
    <ligand>
        <name>Mg(2+)</name>
        <dbReference type="ChEBI" id="CHEBI:18420"/>
        <label>1</label>
    </ligand>
</feature>
<feature type="binding site" evidence="1">
    <location>
        <position position="671"/>
    </location>
    <ligand>
        <name>Mg(2+)</name>
        <dbReference type="ChEBI" id="CHEBI:18420"/>
        <label>2</label>
    </ligand>
</feature>
<feature type="binding site" evidence="1">
    <location>
        <position position="872"/>
    </location>
    <ligand>
        <name>Mg(2+)</name>
        <dbReference type="ChEBI" id="CHEBI:18420"/>
        <label>3</label>
    </ligand>
</feature>
<feature type="binding site" evidence="1">
    <location>
        <position position="873"/>
    </location>
    <ligand>
        <name>Mg(2+)</name>
        <dbReference type="ChEBI" id="CHEBI:18420"/>
        <label>3</label>
    </ligand>
</feature>
<feature type="binding site" evidence="1">
    <location>
        <position position="876"/>
    </location>
    <ligand>
        <name>Mg(2+)</name>
        <dbReference type="ChEBI" id="CHEBI:18420"/>
        <label>3</label>
    </ligand>
</feature>
<feature type="binding site" evidence="1">
    <location>
        <position position="880"/>
    </location>
    <ligand>
        <name>Mg(2+)</name>
        <dbReference type="ChEBI" id="CHEBI:18420"/>
        <label>3</label>
    </ligand>
</feature>
<name>PADC1_PHOAM</name>
<comment type="function">
    <text evidence="2">Involved in the synthesis of labdane-related hydrocarbons by catalyzing the conversion of geranylgeranyl diphosphate (GGDP) to phyllocladan-16-alpha-ol in a two step via type B cyclization into a (+)-copalyl diphosphate ((+)-CDP) intermediate.</text>
</comment>
<comment type="catalytic activity">
    <reaction evidence="2">
        <text>(2E,6E,10E)-geranylgeranyl diphosphate = (+)-copalyl diphosphate</text>
        <dbReference type="Rhea" id="RHEA:24316"/>
        <dbReference type="ChEBI" id="CHEBI:58635"/>
        <dbReference type="ChEBI" id="CHEBI:58756"/>
        <dbReference type="EC" id="5.5.1.12"/>
    </reaction>
</comment>
<comment type="catalytic activity">
    <reaction evidence="2">
        <text>(+)-copalyl diphosphate + H2O = phyllocladan-16alpha-ol + diphosphate</text>
        <dbReference type="Rhea" id="RHEA:26430"/>
        <dbReference type="ChEBI" id="CHEBI:15377"/>
        <dbReference type="ChEBI" id="CHEBI:33019"/>
        <dbReference type="ChEBI" id="CHEBI:53643"/>
        <dbReference type="ChEBI" id="CHEBI:58635"/>
        <dbReference type="EC" id="4.2.3.45"/>
    </reaction>
</comment>
<comment type="cofactor">
    <cofactor evidence="1">
        <name>Mg(2+)</name>
        <dbReference type="ChEBI" id="CHEBI:18420"/>
    </cofactor>
</comment>
<comment type="domain">
    <text evidence="2">The DXDD and DEXXE motifs are important for the catalytic activity.</text>
</comment>
<comment type="similarity">
    <text evidence="3">Belongs to the terpene synthase family.</text>
</comment>
<sequence length="1004" mass="112836">MTIMDIDDHSRLRDLAVSLIRQAAEGYSPKYGYGSMSCAAYDTAWVSLVAKPFNGIKKWLFPQSFKFLLENQENDGSWGRQTSPVDRILNTAAPLLSLQRHAREPLQLHDVCEDGDLDDRIHRATLSLQRQLSDWDIASTAHVGFEIIVPALLNLLAAEGLCFSFKAQDELMKVNAAKLKRFDPEVLLYGKHKTTLLHSLEAFVGIIDFDKVVHHKVGGSFMASPSATAAYLMNASCWDDEAEDYIKNVLVNGSGRGHGAVPSAYPSSNFEYSWLLSTLLHAGFTAKDIECPELCDVAGMLENSFIEGQGTIGFARSISSDADDTAKAAFALNKLGYDVSVNEMVKEFEVKNHFQTYPSERDASLSANCNTLLALLHQKQVGAYQPQILKCVKFLTRCWWNTDGPIRDKWNQSHLYSTMLMVQALTEFQAILDQKGLPYGLNTVEMARVSICLFQGCLRTMLQQCEDGSWSHSREQTAYAVLTLGQARRLSTFKHLQSQIDSAIDQAATFIRLHSVDLAQQSLPEFIWTEKVSYTSPLVTEAYCLAALKVATSLVDNPGIVGESLDLGIPSRQRIDKYIWLFHQTPLFRSLPEWQLRASFIEGHLFLPIVNEHRLDVFPRKNMDPDDDYIRLIPFTWTATNNRNFTFASPAWLYDMIMVSVVDYQADEFMEAVAGLTFSEDLSMLVGLIQEVLTPYKTEPASPVTSLIDMSSVQCPRAKLSNIASGDIEEVRTCLRRFASFFLDHPAVRNAQRDDRATAWREVHNYLVAHVRHTQDNMRLNLQEQRRWYVSRNMPYFHWVRSNDDIACPITFGFVTCLVPYLVANPTVERAVIGNESESIVTSSDVSFDSVESKYYADDVCRHITNVTRIYNDCGSVVRDATEKNLNSVNFPEFAVTASGSEKQALRAMGEYERACCQAAFQRLEEASLQTATTEAERAKRRRRLDVWKVFLDTADPYGQIYVVRDFTARSVHVRETGIASTAKDVPLVSSSVPLVGGGPMLVT</sequence>
<organism>
    <name type="scientific">Phomopsis amygdali</name>
    <name type="common">Fusicoccum amygdali</name>
    <dbReference type="NCBI Taxonomy" id="1214568"/>
    <lineage>
        <taxon>Eukaryota</taxon>
        <taxon>Fungi</taxon>
        <taxon>Dikarya</taxon>
        <taxon>Ascomycota</taxon>
        <taxon>Pezizomycotina</taxon>
        <taxon>Sordariomycetes</taxon>
        <taxon>Sordariomycetidae</taxon>
        <taxon>Diaporthales</taxon>
        <taxon>Diaporthaceae</taxon>
        <taxon>Diaporthe</taxon>
    </lineage>
</organism>
<protein>
    <recommendedName>
        <fullName>Phyllocladan-16-alpha-ol synthase</fullName>
        <ecNumber>4.2.3.45</ecNumber>
        <ecNumber>5.5.1.12</ecNumber>
    </recommendedName>
</protein>
<keyword id="KW-0413">Isomerase</keyword>
<keyword id="KW-0456">Lyase</keyword>
<keyword id="KW-0460">Magnesium</keyword>
<keyword id="KW-0479">Metal-binding</keyword>